<feature type="chain" id="PRO_1000121793" description="Large ribosomal subunit protein uL29">
    <location>
        <begin position="1"/>
        <end position="75"/>
    </location>
</feature>
<organism>
    <name type="scientific">Nostoc punctiforme (strain ATCC 29133 / PCC 73102)</name>
    <dbReference type="NCBI Taxonomy" id="63737"/>
    <lineage>
        <taxon>Bacteria</taxon>
        <taxon>Bacillati</taxon>
        <taxon>Cyanobacteriota</taxon>
        <taxon>Cyanophyceae</taxon>
        <taxon>Nostocales</taxon>
        <taxon>Nostocaceae</taxon>
        <taxon>Nostoc</taxon>
    </lineage>
</organism>
<dbReference type="EMBL" id="CP001037">
    <property type="protein sequence ID" value="ACC82755.1"/>
    <property type="molecule type" value="Genomic_DNA"/>
</dbReference>
<dbReference type="RefSeq" id="WP_012410717.1">
    <property type="nucleotide sequence ID" value="NC_010628.1"/>
</dbReference>
<dbReference type="SMR" id="B2ITP7"/>
<dbReference type="STRING" id="63737.Npun_R4382"/>
<dbReference type="EnsemblBacteria" id="ACC82755">
    <property type="protein sequence ID" value="ACC82755"/>
    <property type="gene ID" value="Npun_R4382"/>
</dbReference>
<dbReference type="KEGG" id="npu:Npun_R4382"/>
<dbReference type="eggNOG" id="COG0255">
    <property type="taxonomic scope" value="Bacteria"/>
</dbReference>
<dbReference type="HOGENOM" id="CLU_158491_0_0_3"/>
<dbReference type="OrthoDB" id="9815192at2"/>
<dbReference type="PhylomeDB" id="B2ITP7"/>
<dbReference type="Proteomes" id="UP000001191">
    <property type="component" value="Chromosome"/>
</dbReference>
<dbReference type="GO" id="GO:0022625">
    <property type="term" value="C:cytosolic large ribosomal subunit"/>
    <property type="evidence" value="ECO:0007669"/>
    <property type="project" value="TreeGrafter"/>
</dbReference>
<dbReference type="GO" id="GO:0003735">
    <property type="term" value="F:structural constituent of ribosome"/>
    <property type="evidence" value="ECO:0007669"/>
    <property type="project" value="InterPro"/>
</dbReference>
<dbReference type="GO" id="GO:0006412">
    <property type="term" value="P:translation"/>
    <property type="evidence" value="ECO:0007669"/>
    <property type="project" value="UniProtKB-UniRule"/>
</dbReference>
<dbReference type="Gene3D" id="1.10.287.310">
    <property type="match status" value="1"/>
</dbReference>
<dbReference type="HAMAP" id="MF_00374">
    <property type="entry name" value="Ribosomal_uL29"/>
    <property type="match status" value="1"/>
</dbReference>
<dbReference type="InterPro" id="IPR050063">
    <property type="entry name" value="Ribosomal_protein_uL29"/>
</dbReference>
<dbReference type="InterPro" id="IPR001854">
    <property type="entry name" value="Ribosomal_uL29"/>
</dbReference>
<dbReference type="InterPro" id="IPR018254">
    <property type="entry name" value="Ribosomal_uL29_CS"/>
</dbReference>
<dbReference type="InterPro" id="IPR036049">
    <property type="entry name" value="Ribosomal_uL29_sf"/>
</dbReference>
<dbReference type="NCBIfam" id="TIGR00012">
    <property type="entry name" value="L29"/>
    <property type="match status" value="1"/>
</dbReference>
<dbReference type="PANTHER" id="PTHR10916">
    <property type="entry name" value="60S RIBOSOMAL PROTEIN L35/50S RIBOSOMAL PROTEIN L29"/>
    <property type="match status" value="1"/>
</dbReference>
<dbReference type="PANTHER" id="PTHR10916:SF0">
    <property type="entry name" value="LARGE RIBOSOMAL SUBUNIT PROTEIN UL29C"/>
    <property type="match status" value="1"/>
</dbReference>
<dbReference type="Pfam" id="PF00831">
    <property type="entry name" value="Ribosomal_L29"/>
    <property type="match status" value="1"/>
</dbReference>
<dbReference type="SUPFAM" id="SSF46561">
    <property type="entry name" value="Ribosomal protein L29 (L29p)"/>
    <property type="match status" value="1"/>
</dbReference>
<dbReference type="PROSITE" id="PS00579">
    <property type="entry name" value="RIBOSOMAL_L29"/>
    <property type="match status" value="1"/>
</dbReference>
<proteinExistence type="inferred from homology"/>
<accession>B2ITP7</accession>
<protein>
    <recommendedName>
        <fullName evidence="1">Large ribosomal subunit protein uL29</fullName>
    </recommendedName>
    <alternativeName>
        <fullName evidence="2">50S ribosomal protein L29</fullName>
    </alternativeName>
</protein>
<keyword id="KW-1185">Reference proteome</keyword>
<keyword id="KW-0687">Ribonucleoprotein</keyword>
<keyword id="KW-0689">Ribosomal protein</keyword>
<comment type="similarity">
    <text evidence="1">Belongs to the universal ribosomal protein uL29 family.</text>
</comment>
<gene>
    <name evidence="1" type="primary">rpmC</name>
    <name evidence="1" type="synonym">rpl29</name>
    <name type="ordered locus">Npun_R4382</name>
</gene>
<name>RL29_NOSP7</name>
<reference key="1">
    <citation type="journal article" date="2013" name="Plant Physiol.">
        <title>A Nostoc punctiforme Sugar Transporter Necessary to Establish a Cyanobacterium-Plant Symbiosis.</title>
        <authorList>
            <person name="Ekman M."/>
            <person name="Picossi S."/>
            <person name="Campbell E.L."/>
            <person name="Meeks J.C."/>
            <person name="Flores E."/>
        </authorList>
    </citation>
    <scope>NUCLEOTIDE SEQUENCE [LARGE SCALE GENOMIC DNA]</scope>
    <source>
        <strain>ATCC 29133 / PCC 73102</strain>
    </source>
</reference>
<evidence type="ECO:0000255" key="1">
    <source>
        <dbReference type="HAMAP-Rule" id="MF_00374"/>
    </source>
</evidence>
<evidence type="ECO:0000305" key="2"/>
<sequence length="75" mass="8848">MPLPKISEARELSDEKLSDEIVAIKRQLFQLRLQKATRQLEKPHQFRQARHRLAQLLTLETERKRAASQSAKEEK</sequence>